<organism>
    <name type="scientific">Staphylococcus aureus (strain USA300 / TCH1516)</name>
    <dbReference type="NCBI Taxonomy" id="451516"/>
    <lineage>
        <taxon>Bacteria</taxon>
        <taxon>Bacillati</taxon>
        <taxon>Bacillota</taxon>
        <taxon>Bacilli</taxon>
        <taxon>Bacillales</taxon>
        <taxon>Staphylococcaceae</taxon>
        <taxon>Staphylococcus</taxon>
    </lineage>
</organism>
<sequence length="166" mass="19645">MAHGRQQDELQDITLLGNQDNTYNFDYRPDVLESFDNKHQGRDYFVKFNCPEFTSLCPITGQPDFATIYISYIPNVKMVESKSLKLYLFSFRNHGDFHEDCMNIIMNDLIELMDPHYIEVWGKFTPRGGISIDPYTNYGRPNSKYEKMAEHRLMNHDLYPEKIDNR</sequence>
<keyword id="KW-0963">Cytoplasm</keyword>
<keyword id="KW-0521">NADP</keyword>
<keyword id="KW-0560">Oxidoreductase</keyword>
<keyword id="KW-0671">Queuosine biosynthesis</keyword>
<comment type="function">
    <text evidence="1">Catalyzes the NADPH-dependent reduction of 7-cyano-7-deazaguanine (preQ0) to 7-aminomethyl-7-deazaguanine (preQ1).</text>
</comment>
<comment type="catalytic activity">
    <reaction evidence="1">
        <text>7-aminomethyl-7-carbaguanine + 2 NADP(+) = 7-cyano-7-deazaguanine + 2 NADPH + 3 H(+)</text>
        <dbReference type="Rhea" id="RHEA:13409"/>
        <dbReference type="ChEBI" id="CHEBI:15378"/>
        <dbReference type="ChEBI" id="CHEBI:45075"/>
        <dbReference type="ChEBI" id="CHEBI:57783"/>
        <dbReference type="ChEBI" id="CHEBI:58349"/>
        <dbReference type="ChEBI" id="CHEBI:58703"/>
        <dbReference type="EC" id="1.7.1.13"/>
    </reaction>
</comment>
<comment type="pathway">
    <text evidence="1">tRNA modification; tRNA-queuosine biosynthesis.</text>
</comment>
<comment type="subcellular location">
    <subcellularLocation>
        <location evidence="1">Cytoplasm</location>
    </subcellularLocation>
</comment>
<comment type="similarity">
    <text evidence="1">Belongs to the GTP cyclohydrolase I family. QueF type 1 subfamily.</text>
</comment>
<accession>A8Z000</accession>
<proteinExistence type="inferred from homology"/>
<reference key="1">
    <citation type="journal article" date="2007" name="BMC Microbiol.">
        <title>Subtle genetic changes enhance virulence of methicillin resistant and sensitive Staphylococcus aureus.</title>
        <authorList>
            <person name="Highlander S.K."/>
            <person name="Hulten K.G."/>
            <person name="Qin X."/>
            <person name="Jiang H."/>
            <person name="Yerrapragada S."/>
            <person name="Mason E.O. Jr."/>
            <person name="Shang Y."/>
            <person name="Williams T.M."/>
            <person name="Fortunov R.M."/>
            <person name="Liu Y."/>
            <person name="Igboeli O."/>
            <person name="Petrosino J."/>
            <person name="Tirumalai M."/>
            <person name="Uzman A."/>
            <person name="Fox G.E."/>
            <person name="Cardenas A.M."/>
            <person name="Muzny D.M."/>
            <person name="Hemphill L."/>
            <person name="Ding Y."/>
            <person name="Dugan S."/>
            <person name="Blyth P.R."/>
            <person name="Buhay C.J."/>
            <person name="Dinh H.H."/>
            <person name="Hawes A.C."/>
            <person name="Holder M."/>
            <person name="Kovar C.L."/>
            <person name="Lee S.L."/>
            <person name="Liu W."/>
            <person name="Nazareth L.V."/>
            <person name="Wang Q."/>
            <person name="Zhou J."/>
            <person name="Kaplan S.L."/>
            <person name="Weinstock G.M."/>
        </authorList>
    </citation>
    <scope>NUCLEOTIDE SEQUENCE [LARGE SCALE GENOMIC DNA]</scope>
    <source>
        <strain>USA300 / TCH1516</strain>
    </source>
</reference>
<evidence type="ECO:0000255" key="1">
    <source>
        <dbReference type="HAMAP-Rule" id="MF_00818"/>
    </source>
</evidence>
<name>QUEF_STAAT</name>
<protein>
    <recommendedName>
        <fullName evidence="1">NADPH-dependent 7-cyano-7-deazaguanine reductase</fullName>
        <ecNumber evidence="1">1.7.1.13</ecNumber>
    </recommendedName>
    <alternativeName>
        <fullName evidence="1">7-cyano-7-carbaguanine reductase</fullName>
    </alternativeName>
    <alternativeName>
        <fullName evidence="1">NADPH-dependent nitrile oxidoreductase</fullName>
    </alternativeName>
    <alternativeName>
        <fullName evidence="1">PreQ(0) reductase</fullName>
    </alternativeName>
</protein>
<gene>
    <name evidence="1" type="primary">queF</name>
    <name type="ordered locus">USA300HOU_0752</name>
</gene>
<feature type="chain" id="PRO_1000083841" description="NADPH-dependent 7-cyano-7-deazaguanine reductase">
    <location>
        <begin position="1"/>
        <end position="166"/>
    </location>
</feature>
<feature type="active site" description="Thioimide intermediate" evidence="1">
    <location>
        <position position="57"/>
    </location>
</feature>
<feature type="active site" description="Proton donor" evidence="1">
    <location>
        <position position="64"/>
    </location>
</feature>
<feature type="binding site" evidence="1">
    <location>
        <begin position="79"/>
        <end position="81"/>
    </location>
    <ligand>
        <name>substrate</name>
    </ligand>
</feature>
<feature type="binding site" evidence="1">
    <location>
        <begin position="98"/>
        <end position="99"/>
    </location>
    <ligand>
        <name>substrate</name>
    </ligand>
</feature>
<dbReference type="EC" id="1.7.1.13" evidence="1"/>
<dbReference type="EMBL" id="CP000730">
    <property type="protein sequence ID" value="ABX28773.1"/>
    <property type="molecule type" value="Genomic_DNA"/>
</dbReference>
<dbReference type="RefSeq" id="WP_000930014.1">
    <property type="nucleotide sequence ID" value="NC_010079.1"/>
</dbReference>
<dbReference type="SMR" id="A8Z000"/>
<dbReference type="KEGG" id="sax:USA300HOU_0752"/>
<dbReference type="HOGENOM" id="CLU_102489_0_1_9"/>
<dbReference type="UniPathway" id="UPA00392"/>
<dbReference type="GO" id="GO:0005737">
    <property type="term" value="C:cytoplasm"/>
    <property type="evidence" value="ECO:0007669"/>
    <property type="project" value="UniProtKB-SubCell"/>
</dbReference>
<dbReference type="GO" id="GO:0033739">
    <property type="term" value="F:preQ1 synthase activity"/>
    <property type="evidence" value="ECO:0007669"/>
    <property type="project" value="UniProtKB-UniRule"/>
</dbReference>
<dbReference type="GO" id="GO:0008616">
    <property type="term" value="P:queuosine biosynthetic process"/>
    <property type="evidence" value="ECO:0007669"/>
    <property type="project" value="UniProtKB-UniRule"/>
</dbReference>
<dbReference type="GO" id="GO:0006400">
    <property type="term" value="P:tRNA modification"/>
    <property type="evidence" value="ECO:0007669"/>
    <property type="project" value="UniProtKB-UniRule"/>
</dbReference>
<dbReference type="Gene3D" id="3.30.1130.10">
    <property type="match status" value="1"/>
</dbReference>
<dbReference type="HAMAP" id="MF_00818">
    <property type="entry name" value="QueF_type1"/>
    <property type="match status" value="1"/>
</dbReference>
<dbReference type="InterPro" id="IPR043133">
    <property type="entry name" value="GTP-CH-I_C/QueF"/>
</dbReference>
<dbReference type="InterPro" id="IPR050084">
    <property type="entry name" value="NADPH_dep_7-cyano-7-deazaG_red"/>
</dbReference>
<dbReference type="InterPro" id="IPR029500">
    <property type="entry name" value="QueF"/>
</dbReference>
<dbReference type="InterPro" id="IPR016856">
    <property type="entry name" value="QueF_type1"/>
</dbReference>
<dbReference type="NCBIfam" id="TIGR03139">
    <property type="entry name" value="QueF-II"/>
    <property type="match status" value="1"/>
</dbReference>
<dbReference type="PANTHER" id="PTHR34354">
    <property type="entry name" value="NADPH-DEPENDENT 7-CYANO-7-DEAZAGUANINE REDUCTASE"/>
    <property type="match status" value="1"/>
</dbReference>
<dbReference type="PANTHER" id="PTHR34354:SF1">
    <property type="entry name" value="NADPH-DEPENDENT 7-CYANO-7-DEAZAGUANINE REDUCTASE"/>
    <property type="match status" value="1"/>
</dbReference>
<dbReference type="Pfam" id="PF14489">
    <property type="entry name" value="QueF"/>
    <property type="match status" value="1"/>
</dbReference>
<dbReference type="PIRSF" id="PIRSF027377">
    <property type="entry name" value="Nitrile_oxidored_QueF"/>
    <property type="match status" value="1"/>
</dbReference>
<dbReference type="SUPFAM" id="SSF55620">
    <property type="entry name" value="Tetrahydrobiopterin biosynthesis enzymes-like"/>
    <property type="match status" value="1"/>
</dbReference>